<gene>
    <name type="primary">nodP</name>
</gene>
<reference key="1">
    <citation type="submission" date="1996-04" db="EMBL/GenBank/DDBJ databases">
        <authorList>
            <person name="Cloutier J."/>
        </authorList>
    </citation>
    <scope>NUCLEOTIDE SEQUENCE [GENOMIC DNA]</scope>
</reference>
<dbReference type="EC" id="2.7.7.4"/>
<dbReference type="EMBL" id="U53327">
    <property type="protein sequence ID" value="AAB16901.1"/>
    <property type="molecule type" value="Genomic_DNA"/>
</dbReference>
<dbReference type="SMR" id="P72338"/>
<dbReference type="GO" id="GO:0005524">
    <property type="term" value="F:ATP binding"/>
    <property type="evidence" value="ECO:0007669"/>
    <property type="project" value="UniProtKB-KW"/>
</dbReference>
<dbReference type="GO" id="GO:0004781">
    <property type="term" value="F:sulfate adenylyltransferase (ATP) activity"/>
    <property type="evidence" value="ECO:0007669"/>
    <property type="project" value="UniProtKB-UniRule"/>
</dbReference>
<dbReference type="GO" id="GO:0070814">
    <property type="term" value="P:hydrogen sulfide biosynthetic process"/>
    <property type="evidence" value="ECO:0007669"/>
    <property type="project" value="UniProtKB-UniRule"/>
</dbReference>
<dbReference type="GO" id="GO:0000103">
    <property type="term" value="P:sulfate assimilation"/>
    <property type="evidence" value="ECO:0007669"/>
    <property type="project" value="UniProtKB-UniRule"/>
</dbReference>
<dbReference type="CDD" id="cd23946">
    <property type="entry name" value="Sulfate_adenylyltransferase_2"/>
    <property type="match status" value="1"/>
</dbReference>
<dbReference type="FunFam" id="3.40.50.620:FF:000002">
    <property type="entry name" value="Sulfate adenylyltransferase subunit 2"/>
    <property type="match status" value="1"/>
</dbReference>
<dbReference type="Gene3D" id="3.40.50.620">
    <property type="entry name" value="HUPs"/>
    <property type="match status" value="1"/>
</dbReference>
<dbReference type="HAMAP" id="MF_00064">
    <property type="entry name" value="Sulf_adenylyltr_sub2"/>
    <property type="match status" value="1"/>
</dbReference>
<dbReference type="InterPro" id="IPR002500">
    <property type="entry name" value="PAPS_reduct_dom"/>
</dbReference>
<dbReference type="InterPro" id="IPR014729">
    <property type="entry name" value="Rossmann-like_a/b/a_fold"/>
</dbReference>
<dbReference type="InterPro" id="IPR011784">
    <property type="entry name" value="SO4_adenylTrfase_ssu"/>
</dbReference>
<dbReference type="InterPro" id="IPR050128">
    <property type="entry name" value="Sulfate_adenylyltrnsfr_sub2"/>
</dbReference>
<dbReference type="NCBIfam" id="TIGR02039">
    <property type="entry name" value="CysD"/>
    <property type="match status" value="1"/>
</dbReference>
<dbReference type="NCBIfam" id="NF003587">
    <property type="entry name" value="PRK05253.1"/>
    <property type="match status" value="1"/>
</dbReference>
<dbReference type="NCBIfam" id="NF009214">
    <property type="entry name" value="PRK12563.1"/>
    <property type="match status" value="1"/>
</dbReference>
<dbReference type="PANTHER" id="PTHR43196">
    <property type="entry name" value="SULFATE ADENYLYLTRANSFERASE SUBUNIT 2"/>
    <property type="match status" value="1"/>
</dbReference>
<dbReference type="PANTHER" id="PTHR43196:SF1">
    <property type="entry name" value="SULFATE ADENYLYLTRANSFERASE SUBUNIT 2"/>
    <property type="match status" value="1"/>
</dbReference>
<dbReference type="Pfam" id="PF01507">
    <property type="entry name" value="PAPS_reduct"/>
    <property type="match status" value="1"/>
</dbReference>
<dbReference type="PIRSF" id="PIRSF002936">
    <property type="entry name" value="CysDAde_trans"/>
    <property type="match status" value="1"/>
</dbReference>
<dbReference type="SUPFAM" id="SSF52402">
    <property type="entry name" value="Adenine nucleotide alpha hydrolases-like"/>
    <property type="match status" value="1"/>
</dbReference>
<accession>P72338</accession>
<proteinExistence type="inferred from homology"/>
<keyword id="KW-0067">ATP-binding</keyword>
<keyword id="KW-0536">Nodulation</keyword>
<keyword id="KW-0547">Nucleotide-binding</keyword>
<keyword id="KW-0548">Nucleotidyltransferase</keyword>
<keyword id="KW-0808">Transferase</keyword>
<name>NODP_RHIS3</name>
<evidence type="ECO:0000256" key="1">
    <source>
        <dbReference type="SAM" id="MobiDB-lite"/>
    </source>
</evidence>
<evidence type="ECO:0000305" key="2"/>
<organism>
    <name type="scientific">Rhizobium sp. (strain N33)</name>
    <dbReference type="NCBI Taxonomy" id="103798"/>
    <lineage>
        <taxon>Bacteria</taxon>
        <taxon>Pseudomonadati</taxon>
        <taxon>Pseudomonadota</taxon>
        <taxon>Alphaproteobacteria</taxon>
        <taxon>Hyphomicrobiales</taxon>
        <taxon>Rhizobiaceae</taxon>
        <taxon>Rhizobium/Agrobacterium group</taxon>
        <taxon>Rhizobium</taxon>
    </lineage>
</organism>
<sequence>MNVPLTHLQRLEAESIHIFREVAAAFTKPVMLYSVGKDSSVLMHLAMKAFYPAKPPFPFLHVDTTWKFREMIAFRDQMAQKRGFDLLVHFNEDGVRDNINPFDHGSNTHTHVMKTVALRQALDKYGFDAAFGGARRDEEKSRAKERIFSFRNAQHVWDPKNQRPEMWKIFNTRIASGESIRVFPLSNWTELDIWQYILQENIPIVPLYFAKQRPVVERDGMLILRDDERMKLRPGETVENRLVRFRTLGCYPLTGAIESDADTLEAIVGEMLTARTSERQGRLIDRDEAGSMEKKKREGYF</sequence>
<protein>
    <recommendedName>
        <fullName>Sulfate adenylyltransferase subunit 2</fullName>
        <ecNumber>2.7.7.4</ecNumber>
    </recommendedName>
    <alternativeName>
        <fullName>ATP-sulfurylase small subunit</fullName>
    </alternativeName>
    <alternativeName>
        <fullName>Nodulation protein P</fullName>
    </alternativeName>
    <alternativeName>
        <fullName>Sulfate adenylate transferase</fullName>
        <shortName>SAT</shortName>
    </alternativeName>
</protein>
<comment type="function">
    <text>Proposed to provide activated sulfate for transfer to nod factor.</text>
</comment>
<comment type="catalytic activity">
    <reaction>
        <text>sulfate + ATP + H(+) = adenosine 5'-phosphosulfate + diphosphate</text>
        <dbReference type="Rhea" id="RHEA:18133"/>
        <dbReference type="ChEBI" id="CHEBI:15378"/>
        <dbReference type="ChEBI" id="CHEBI:16189"/>
        <dbReference type="ChEBI" id="CHEBI:30616"/>
        <dbReference type="ChEBI" id="CHEBI:33019"/>
        <dbReference type="ChEBI" id="CHEBI:58243"/>
        <dbReference type="EC" id="2.7.7.4"/>
    </reaction>
</comment>
<comment type="subunit">
    <text evidence="2">Sulfate-activating enzymes, NodP and NodQ, may be physically associated.</text>
</comment>
<comment type="similarity">
    <text evidence="2">Belongs to the PAPS reductase family. CysD subfamily.</text>
</comment>
<feature type="chain" id="PRO_0000100686" description="Sulfate adenylyltransferase subunit 2">
    <location>
        <begin position="1"/>
        <end position="301"/>
    </location>
</feature>
<feature type="region of interest" description="Disordered" evidence="1">
    <location>
        <begin position="279"/>
        <end position="301"/>
    </location>
</feature>